<comment type="similarity">
    <text evidence="1">Belongs to the UPF0251 family.</text>
</comment>
<name>Y619_METMP</name>
<accession>Q6LZK8</accession>
<feature type="chain" id="PRO_0000147580" description="UPF0251 protein MMP0619">
    <location>
        <begin position="1"/>
        <end position="131"/>
    </location>
</feature>
<gene>
    <name type="ordered locus">MMP0619</name>
</gene>
<reference key="1">
    <citation type="journal article" date="2004" name="J. Bacteriol.">
        <title>Complete genome sequence of the genetically tractable hydrogenotrophic methanogen Methanococcus maripaludis.</title>
        <authorList>
            <person name="Hendrickson E.L."/>
            <person name="Kaul R."/>
            <person name="Zhou Y."/>
            <person name="Bovee D."/>
            <person name="Chapman P."/>
            <person name="Chung J."/>
            <person name="Conway de Macario E."/>
            <person name="Dodsworth J.A."/>
            <person name="Gillett W."/>
            <person name="Graham D.E."/>
            <person name="Hackett M."/>
            <person name="Haydock A.K."/>
            <person name="Kang A."/>
            <person name="Land M.L."/>
            <person name="Levy R."/>
            <person name="Lie T.J."/>
            <person name="Major T.A."/>
            <person name="Moore B.C."/>
            <person name="Porat I."/>
            <person name="Palmeiri A."/>
            <person name="Rouse G."/>
            <person name="Saenphimmachak C."/>
            <person name="Soell D."/>
            <person name="Van Dien S."/>
            <person name="Wang T."/>
            <person name="Whitman W.B."/>
            <person name="Xia Q."/>
            <person name="Zhang Y."/>
            <person name="Larimer F.W."/>
            <person name="Olson M.V."/>
            <person name="Leigh J.A."/>
        </authorList>
    </citation>
    <scope>NUCLEOTIDE SEQUENCE [LARGE SCALE GENOMIC DNA]</scope>
    <source>
        <strain>DSM 14266 / JCM 13030 / NBRC 101832 / S2 / LL</strain>
    </source>
</reference>
<organism>
    <name type="scientific">Methanococcus maripaludis (strain DSM 14266 / JCM 13030 / NBRC 101832 / S2 / LL)</name>
    <dbReference type="NCBI Taxonomy" id="267377"/>
    <lineage>
        <taxon>Archaea</taxon>
        <taxon>Methanobacteriati</taxon>
        <taxon>Methanobacteriota</taxon>
        <taxon>Methanomada group</taxon>
        <taxon>Methanococci</taxon>
        <taxon>Methanococcales</taxon>
        <taxon>Methanococcaceae</taxon>
        <taxon>Methanococcus</taxon>
    </lineage>
</organism>
<sequence>MKFRKGRPKILRLISEEPQFKLFKPVGIPRTDLESEVLTFEELESIRLVDYLNHPHEDAADEMGISRRVFWNILKSARKKVADALINGKMIDIGGGYYKIRDCNYEDECQRGKFCKYGVSNCLRLKNRDSE</sequence>
<keyword id="KW-1185">Reference proteome</keyword>
<protein>
    <recommendedName>
        <fullName evidence="1">UPF0251 protein MMP0619</fullName>
    </recommendedName>
</protein>
<evidence type="ECO:0000255" key="1">
    <source>
        <dbReference type="HAMAP-Rule" id="MF_00674"/>
    </source>
</evidence>
<proteinExistence type="inferred from homology"/>
<dbReference type="EMBL" id="BX950229">
    <property type="protein sequence ID" value="CAF30175.1"/>
    <property type="molecule type" value="Genomic_DNA"/>
</dbReference>
<dbReference type="RefSeq" id="WP_011170563.1">
    <property type="nucleotide sequence ID" value="NC_005791.1"/>
</dbReference>
<dbReference type="STRING" id="267377.MMP0619"/>
<dbReference type="EnsemblBacteria" id="CAF30175">
    <property type="protein sequence ID" value="CAF30175"/>
    <property type="gene ID" value="MMP0619"/>
</dbReference>
<dbReference type="KEGG" id="mmp:MMP0619"/>
<dbReference type="PATRIC" id="fig|267377.15.peg.634"/>
<dbReference type="eggNOG" id="arCOG02238">
    <property type="taxonomic scope" value="Archaea"/>
</dbReference>
<dbReference type="HOGENOM" id="CLU_094511_0_1_2"/>
<dbReference type="OrthoDB" id="74471at2157"/>
<dbReference type="Proteomes" id="UP000000590">
    <property type="component" value="Chromosome"/>
</dbReference>
<dbReference type="HAMAP" id="MF_00674">
    <property type="entry name" value="UPF0251"/>
    <property type="match status" value="1"/>
</dbReference>
<dbReference type="InterPro" id="IPR002852">
    <property type="entry name" value="UPF0251"/>
</dbReference>
<dbReference type="PANTHER" id="PTHR37478">
    <property type="match status" value="1"/>
</dbReference>
<dbReference type="PANTHER" id="PTHR37478:SF2">
    <property type="entry name" value="UPF0251 PROTEIN TK0562"/>
    <property type="match status" value="1"/>
</dbReference>
<dbReference type="Pfam" id="PF02001">
    <property type="entry name" value="DUF134"/>
    <property type="match status" value="1"/>
</dbReference>